<feature type="chain" id="PRO_1000047552" description="Glutamate racemase">
    <location>
        <begin position="1"/>
        <end position="262"/>
    </location>
</feature>
<feature type="active site" description="Proton donor/acceptor" evidence="1">
    <location>
        <position position="70"/>
    </location>
</feature>
<feature type="active site" description="Proton donor/acceptor" evidence="1">
    <location>
        <position position="182"/>
    </location>
</feature>
<feature type="binding site" evidence="1">
    <location>
        <begin position="7"/>
        <end position="8"/>
    </location>
    <ligand>
        <name>substrate</name>
    </ligand>
</feature>
<feature type="binding site" evidence="1">
    <location>
        <begin position="39"/>
        <end position="40"/>
    </location>
    <ligand>
        <name>substrate</name>
    </ligand>
</feature>
<feature type="binding site" evidence="1">
    <location>
        <begin position="71"/>
        <end position="72"/>
    </location>
    <ligand>
        <name>substrate</name>
    </ligand>
</feature>
<feature type="binding site" evidence="1">
    <location>
        <begin position="183"/>
        <end position="184"/>
    </location>
    <ligand>
        <name>substrate</name>
    </ligand>
</feature>
<name>MURI_CAMC1</name>
<comment type="function">
    <text evidence="1">Provides the (R)-glutamate required for cell wall biosynthesis.</text>
</comment>
<comment type="catalytic activity">
    <reaction evidence="1">
        <text>L-glutamate = D-glutamate</text>
        <dbReference type="Rhea" id="RHEA:12813"/>
        <dbReference type="ChEBI" id="CHEBI:29985"/>
        <dbReference type="ChEBI" id="CHEBI:29986"/>
        <dbReference type="EC" id="5.1.1.3"/>
    </reaction>
</comment>
<comment type="pathway">
    <text evidence="1">Cell wall biogenesis; peptidoglycan biosynthesis.</text>
</comment>
<comment type="similarity">
    <text evidence="1">Belongs to the aspartate/glutamate racemases family.</text>
</comment>
<organism>
    <name type="scientific">Campylobacter concisus (strain 13826)</name>
    <dbReference type="NCBI Taxonomy" id="360104"/>
    <lineage>
        <taxon>Bacteria</taxon>
        <taxon>Pseudomonadati</taxon>
        <taxon>Campylobacterota</taxon>
        <taxon>Epsilonproteobacteria</taxon>
        <taxon>Campylobacterales</taxon>
        <taxon>Campylobacteraceae</taxon>
        <taxon>Campylobacter</taxon>
    </lineage>
</organism>
<gene>
    <name evidence="1" type="primary">murI</name>
    <name type="ordered locus">Ccon26_09680</name>
    <name type="ORF">CCC13826_1245</name>
</gene>
<keyword id="KW-0133">Cell shape</keyword>
<keyword id="KW-0961">Cell wall biogenesis/degradation</keyword>
<keyword id="KW-0413">Isomerase</keyword>
<keyword id="KW-0573">Peptidoglycan synthesis</keyword>
<evidence type="ECO:0000255" key="1">
    <source>
        <dbReference type="HAMAP-Rule" id="MF_00258"/>
    </source>
</evidence>
<proteinExistence type="inferred from homology"/>
<accession>A7ZDH6</accession>
<reference key="1">
    <citation type="submission" date="2007-10" db="EMBL/GenBank/DDBJ databases">
        <title>Genome sequence of Campylobacter concisus 13826 isolated from human feces.</title>
        <authorList>
            <person name="Fouts D.E."/>
            <person name="Mongodin E.F."/>
            <person name="Puiu D."/>
            <person name="Sebastian Y."/>
            <person name="Miller W.G."/>
            <person name="Mandrell R.E."/>
            <person name="On S."/>
            <person name="Nelson K.E."/>
        </authorList>
    </citation>
    <scope>NUCLEOTIDE SEQUENCE [LARGE SCALE GENOMIC DNA]</scope>
    <source>
        <strain>13826</strain>
    </source>
</reference>
<sequence length="262" mass="29154">MRIGIFDSGLGGLSVLNEALSKLSEHEFLYYADVKNVPYGQKSRDEILKFSFDAVKFLVKNGAKAVVVACNTATSVAIKELRANLSVPIIGMEPAVKKAHDLSHDDALKTLVIATPVTVNGAKLKELIINLNAKDKTELLALPRLVNFAEKAEFESENVKSYLKEELVKFDLSKFDFLVLGCTHFNYFKDSLREILPPNVSIIDGNEGTIKRLISELGLKISSVNLTPNVKFFYSGEEVCEQNELEKISRNLARLEKMRAIC</sequence>
<dbReference type="EC" id="5.1.1.3" evidence="1"/>
<dbReference type="EMBL" id="CP000792">
    <property type="protein sequence ID" value="EAT98607.1"/>
    <property type="molecule type" value="Genomic_DNA"/>
</dbReference>
<dbReference type="RefSeq" id="WP_012001759.1">
    <property type="nucleotide sequence ID" value="NC_009802.2"/>
</dbReference>
<dbReference type="SMR" id="A7ZDH6"/>
<dbReference type="STRING" id="360104.CCC13826_1245"/>
<dbReference type="KEGG" id="cco:CCC13826_1245"/>
<dbReference type="eggNOG" id="COG0796">
    <property type="taxonomic scope" value="Bacteria"/>
</dbReference>
<dbReference type="HOGENOM" id="CLU_052344_1_0_7"/>
<dbReference type="OrthoDB" id="9801055at2"/>
<dbReference type="UniPathway" id="UPA00219"/>
<dbReference type="Proteomes" id="UP000001121">
    <property type="component" value="Chromosome"/>
</dbReference>
<dbReference type="GO" id="GO:0008881">
    <property type="term" value="F:glutamate racemase activity"/>
    <property type="evidence" value="ECO:0007669"/>
    <property type="project" value="UniProtKB-UniRule"/>
</dbReference>
<dbReference type="GO" id="GO:0071555">
    <property type="term" value="P:cell wall organization"/>
    <property type="evidence" value="ECO:0007669"/>
    <property type="project" value="UniProtKB-KW"/>
</dbReference>
<dbReference type="GO" id="GO:0009252">
    <property type="term" value="P:peptidoglycan biosynthetic process"/>
    <property type="evidence" value="ECO:0007669"/>
    <property type="project" value="UniProtKB-UniRule"/>
</dbReference>
<dbReference type="GO" id="GO:0008360">
    <property type="term" value="P:regulation of cell shape"/>
    <property type="evidence" value="ECO:0007669"/>
    <property type="project" value="UniProtKB-KW"/>
</dbReference>
<dbReference type="Gene3D" id="3.40.50.1860">
    <property type="match status" value="2"/>
</dbReference>
<dbReference type="HAMAP" id="MF_00258">
    <property type="entry name" value="Glu_racemase"/>
    <property type="match status" value="1"/>
</dbReference>
<dbReference type="InterPro" id="IPR015942">
    <property type="entry name" value="Asp/Glu/hydantoin_racemase"/>
</dbReference>
<dbReference type="InterPro" id="IPR001920">
    <property type="entry name" value="Asp/Glu_race"/>
</dbReference>
<dbReference type="InterPro" id="IPR018187">
    <property type="entry name" value="Asp/Glu_racemase_AS_1"/>
</dbReference>
<dbReference type="InterPro" id="IPR004391">
    <property type="entry name" value="Glu_race"/>
</dbReference>
<dbReference type="NCBIfam" id="TIGR00067">
    <property type="entry name" value="glut_race"/>
    <property type="match status" value="1"/>
</dbReference>
<dbReference type="PANTHER" id="PTHR21198">
    <property type="entry name" value="GLUTAMATE RACEMASE"/>
    <property type="match status" value="1"/>
</dbReference>
<dbReference type="PANTHER" id="PTHR21198:SF3">
    <property type="entry name" value="GLUTAMATE RACEMASE"/>
    <property type="match status" value="1"/>
</dbReference>
<dbReference type="Pfam" id="PF01177">
    <property type="entry name" value="Asp_Glu_race"/>
    <property type="match status" value="1"/>
</dbReference>
<dbReference type="SUPFAM" id="SSF53681">
    <property type="entry name" value="Aspartate/glutamate racemase"/>
    <property type="match status" value="2"/>
</dbReference>
<dbReference type="PROSITE" id="PS00923">
    <property type="entry name" value="ASP_GLU_RACEMASE_1"/>
    <property type="match status" value="1"/>
</dbReference>
<protein>
    <recommendedName>
        <fullName evidence="1">Glutamate racemase</fullName>
        <ecNumber evidence="1">5.1.1.3</ecNumber>
    </recommendedName>
</protein>